<keyword id="KW-0496">Mitochondrion</keyword>
<keyword id="KW-1185">Reference proteome</keyword>
<keyword id="KW-0809">Transit peptide</keyword>
<gene>
    <name type="primary">RRG9</name>
    <name type="ORF">MGYG_02218</name>
</gene>
<comment type="function">
    <text evidence="1">Required for respiratory activity and maintenance and expression of the mitochondrial genome.</text>
</comment>
<comment type="subcellular location">
    <subcellularLocation>
        <location evidence="1">Mitochondrion</location>
    </subcellularLocation>
</comment>
<comment type="similarity">
    <text evidence="4">Belongs to the RRG9 family.</text>
</comment>
<dbReference type="EMBL" id="DS989823">
    <property type="protein sequence ID" value="EFQ99204.1"/>
    <property type="molecule type" value="Genomic_DNA"/>
</dbReference>
<dbReference type="RefSeq" id="XP_003174687.1">
    <property type="nucleotide sequence ID" value="XM_003174639.1"/>
</dbReference>
<dbReference type="SMR" id="E4UQC3"/>
<dbReference type="STRING" id="535722.E4UQC3"/>
<dbReference type="GeneID" id="10029987"/>
<dbReference type="VEuPathDB" id="FungiDB:MGYG_02218"/>
<dbReference type="eggNOG" id="ENOG502S7IA">
    <property type="taxonomic scope" value="Eukaryota"/>
</dbReference>
<dbReference type="HOGENOM" id="CLU_933757_0_0_1"/>
<dbReference type="InParanoid" id="E4UQC3"/>
<dbReference type="OMA" id="SKWRATE"/>
<dbReference type="OrthoDB" id="5578174at2759"/>
<dbReference type="Proteomes" id="UP000002669">
    <property type="component" value="Unassembled WGS sequence"/>
</dbReference>
<dbReference type="GO" id="GO:0005739">
    <property type="term" value="C:mitochondrion"/>
    <property type="evidence" value="ECO:0007669"/>
    <property type="project" value="UniProtKB-SubCell"/>
</dbReference>
<dbReference type="GO" id="GO:0005634">
    <property type="term" value="C:nucleus"/>
    <property type="evidence" value="ECO:0007669"/>
    <property type="project" value="TreeGrafter"/>
</dbReference>
<dbReference type="InterPro" id="IPR010487">
    <property type="entry name" value="NGRN/Rrg9"/>
</dbReference>
<dbReference type="PANTHER" id="PTHR13475">
    <property type="entry name" value="NEUGRIN"/>
    <property type="match status" value="1"/>
</dbReference>
<dbReference type="PANTHER" id="PTHR13475:SF3">
    <property type="entry name" value="NEUGRIN"/>
    <property type="match status" value="1"/>
</dbReference>
<dbReference type="Pfam" id="PF06413">
    <property type="entry name" value="Neugrin"/>
    <property type="match status" value="1"/>
</dbReference>
<reference key="1">
    <citation type="journal article" date="2012" name="MBio">
        <title>Comparative genome analysis of Trichophyton rubrum and related dermatophytes reveals candidate genes involved in infection.</title>
        <authorList>
            <person name="Martinez D.A."/>
            <person name="Oliver B.G."/>
            <person name="Graeser Y."/>
            <person name="Goldberg J.M."/>
            <person name="Li W."/>
            <person name="Martinez-Rossi N.M."/>
            <person name="Monod M."/>
            <person name="Shelest E."/>
            <person name="Barton R.C."/>
            <person name="Birch E."/>
            <person name="Brakhage A.A."/>
            <person name="Chen Z."/>
            <person name="Gurr S.J."/>
            <person name="Heiman D."/>
            <person name="Heitman J."/>
            <person name="Kosti I."/>
            <person name="Rossi A."/>
            <person name="Saif S."/>
            <person name="Samalova M."/>
            <person name="Saunders C.W."/>
            <person name="Shea T."/>
            <person name="Summerbell R.C."/>
            <person name="Xu J."/>
            <person name="Young S."/>
            <person name="Zeng Q."/>
            <person name="Birren B.W."/>
            <person name="Cuomo C.A."/>
            <person name="White T.C."/>
        </authorList>
    </citation>
    <scope>NUCLEOTIDE SEQUENCE [LARGE SCALE GENOMIC DNA]</scope>
    <source>
        <strain>ATCC MYA-4604 / CBS 118893</strain>
    </source>
</reference>
<name>RRG9_ARTGP</name>
<protein>
    <recommendedName>
        <fullName>Required for respiratory growth protein 9, mitochondrial</fullName>
    </recommendedName>
</protein>
<feature type="transit peptide" description="Mitochondrion" evidence="2">
    <location>
        <begin position="1"/>
        <end position="47"/>
    </location>
</feature>
<feature type="chain" id="PRO_0000407934" description="Required for respiratory growth protein 9, mitochondrial">
    <location>
        <begin position="48"/>
        <end position="297"/>
    </location>
</feature>
<feature type="region of interest" description="Disordered" evidence="3">
    <location>
        <begin position="71"/>
        <end position="97"/>
    </location>
</feature>
<feature type="region of interest" description="Disordered" evidence="3">
    <location>
        <begin position="189"/>
        <end position="297"/>
    </location>
</feature>
<feature type="compositionally biased region" description="Polar residues" evidence="3">
    <location>
        <begin position="229"/>
        <end position="238"/>
    </location>
</feature>
<feature type="compositionally biased region" description="Basic and acidic residues" evidence="3">
    <location>
        <begin position="265"/>
        <end position="275"/>
    </location>
</feature>
<feature type="compositionally biased region" description="Basic and acidic residues" evidence="3">
    <location>
        <begin position="282"/>
        <end position="297"/>
    </location>
</feature>
<accession>E4UQC3</accession>
<sequence length="297" mass="34079">MSSQTLTAANVFVVLRQLRSLCYPIPSFASSQTIPSRAYSNYNAARHTSLVVPANIAIKQWHFAAAYSTAPPSKTAKESGEDTDLLEPTKPKPKKPVPAWAVQKNALKEKFKEGWKPRKKVSPDTMESIRKLHSMDSVKFSTKNLAEEFKISAEAIRRILKSKWRATEEEEIDRRNRWEKRKLRIQEQMMELGLRHTDPISKEGPSSDMESSHRNKSSSAIESLAGEYLSQSRGQESSPQKRRDPWDVTADDLPGTIRTSTRDAWPQERFPERRGSSQRRTRRDEYIERGPRGKPDW</sequence>
<evidence type="ECO:0000250" key="1"/>
<evidence type="ECO:0000255" key="2"/>
<evidence type="ECO:0000256" key="3">
    <source>
        <dbReference type="SAM" id="MobiDB-lite"/>
    </source>
</evidence>
<evidence type="ECO:0000305" key="4"/>
<organism>
    <name type="scientific">Arthroderma gypseum (strain ATCC MYA-4604 / CBS 118893)</name>
    <name type="common">Microsporum gypseum</name>
    <dbReference type="NCBI Taxonomy" id="535722"/>
    <lineage>
        <taxon>Eukaryota</taxon>
        <taxon>Fungi</taxon>
        <taxon>Dikarya</taxon>
        <taxon>Ascomycota</taxon>
        <taxon>Pezizomycotina</taxon>
        <taxon>Eurotiomycetes</taxon>
        <taxon>Eurotiomycetidae</taxon>
        <taxon>Onygenales</taxon>
        <taxon>Arthrodermataceae</taxon>
        <taxon>Nannizzia</taxon>
    </lineage>
</organism>
<proteinExistence type="inferred from homology"/>